<reference key="1">
    <citation type="journal article" date="2005" name="Nucleic Acids Res.">
        <title>The genome sequence of Salmonella enterica serovar Choleraesuis, a highly invasive and resistant zoonotic pathogen.</title>
        <authorList>
            <person name="Chiu C.-H."/>
            <person name="Tang P."/>
            <person name="Chu C."/>
            <person name="Hu S."/>
            <person name="Bao Q."/>
            <person name="Yu J."/>
            <person name="Chou Y.-Y."/>
            <person name="Wang H.-S."/>
            <person name="Lee Y.-S."/>
        </authorList>
    </citation>
    <scope>NUCLEOTIDE SEQUENCE [LARGE SCALE GENOMIC DNA]</scope>
    <source>
        <strain>SC-B67</strain>
    </source>
</reference>
<evidence type="ECO:0000255" key="1">
    <source>
        <dbReference type="HAMAP-Rule" id="MF_00461"/>
    </source>
</evidence>
<evidence type="ECO:0000256" key="2">
    <source>
        <dbReference type="SAM" id="MobiDB-lite"/>
    </source>
</evidence>
<name>RSXC_SALCH</name>
<dbReference type="EC" id="7.-.-.-" evidence="1"/>
<dbReference type="EMBL" id="AE017220">
    <property type="protein sequence ID" value="AAX65381.1"/>
    <property type="molecule type" value="Genomic_DNA"/>
</dbReference>
<dbReference type="RefSeq" id="WP_001539956.1">
    <property type="nucleotide sequence ID" value="NC_006905.1"/>
</dbReference>
<dbReference type="SMR" id="Q57PI0"/>
<dbReference type="KEGG" id="sec:SCH_1475"/>
<dbReference type="HOGENOM" id="CLU_010808_2_1_6"/>
<dbReference type="Proteomes" id="UP000000538">
    <property type="component" value="Chromosome"/>
</dbReference>
<dbReference type="GO" id="GO:0005886">
    <property type="term" value="C:plasma membrane"/>
    <property type="evidence" value="ECO:0007669"/>
    <property type="project" value="UniProtKB-SubCell"/>
</dbReference>
<dbReference type="GO" id="GO:0051539">
    <property type="term" value="F:4 iron, 4 sulfur cluster binding"/>
    <property type="evidence" value="ECO:0007669"/>
    <property type="project" value="UniProtKB-KW"/>
</dbReference>
<dbReference type="GO" id="GO:0009055">
    <property type="term" value="F:electron transfer activity"/>
    <property type="evidence" value="ECO:0007669"/>
    <property type="project" value="InterPro"/>
</dbReference>
<dbReference type="GO" id="GO:0046872">
    <property type="term" value="F:metal ion binding"/>
    <property type="evidence" value="ECO:0007669"/>
    <property type="project" value="UniProtKB-KW"/>
</dbReference>
<dbReference type="GO" id="GO:0022900">
    <property type="term" value="P:electron transport chain"/>
    <property type="evidence" value="ECO:0007669"/>
    <property type="project" value="UniProtKB-UniRule"/>
</dbReference>
<dbReference type="Gene3D" id="3.30.70.20">
    <property type="match status" value="1"/>
</dbReference>
<dbReference type="Gene3D" id="3.40.50.11540">
    <property type="entry name" value="NADH-ubiquinone oxidoreductase 51kDa subunit"/>
    <property type="match status" value="1"/>
</dbReference>
<dbReference type="HAMAP" id="MF_00461">
    <property type="entry name" value="RsxC_RnfC"/>
    <property type="match status" value="1"/>
</dbReference>
<dbReference type="InterPro" id="IPR017896">
    <property type="entry name" value="4Fe4S_Fe-S-bd"/>
</dbReference>
<dbReference type="InterPro" id="IPR017900">
    <property type="entry name" value="4Fe4S_Fe_S_CS"/>
</dbReference>
<dbReference type="InterPro" id="IPR010208">
    <property type="entry name" value="Ion_transpt_RnfC/RsxC"/>
</dbReference>
<dbReference type="InterPro" id="IPR011538">
    <property type="entry name" value="Nuo51_FMN-bd"/>
</dbReference>
<dbReference type="InterPro" id="IPR037225">
    <property type="entry name" value="Nuo51_FMN-bd_sf"/>
</dbReference>
<dbReference type="InterPro" id="IPR026902">
    <property type="entry name" value="RnfC_N"/>
</dbReference>
<dbReference type="InterPro" id="IPR019554">
    <property type="entry name" value="Soluble_ligand-bd"/>
</dbReference>
<dbReference type="NCBIfam" id="NF003454">
    <property type="entry name" value="PRK05035.1"/>
    <property type="match status" value="1"/>
</dbReference>
<dbReference type="NCBIfam" id="TIGR01945">
    <property type="entry name" value="rnfC"/>
    <property type="match status" value="1"/>
</dbReference>
<dbReference type="PANTHER" id="PTHR43034">
    <property type="entry name" value="ION-TRANSLOCATING OXIDOREDUCTASE COMPLEX SUBUNIT C"/>
    <property type="match status" value="1"/>
</dbReference>
<dbReference type="PANTHER" id="PTHR43034:SF2">
    <property type="entry name" value="ION-TRANSLOCATING OXIDOREDUCTASE COMPLEX SUBUNIT C"/>
    <property type="match status" value="1"/>
</dbReference>
<dbReference type="Pfam" id="PF01512">
    <property type="entry name" value="Complex1_51K"/>
    <property type="match status" value="1"/>
</dbReference>
<dbReference type="Pfam" id="PF12838">
    <property type="entry name" value="Fer4_7"/>
    <property type="match status" value="1"/>
</dbReference>
<dbReference type="Pfam" id="PF13375">
    <property type="entry name" value="RnfC_N"/>
    <property type="match status" value="1"/>
</dbReference>
<dbReference type="Pfam" id="PF10531">
    <property type="entry name" value="SLBB"/>
    <property type="match status" value="1"/>
</dbReference>
<dbReference type="SUPFAM" id="SSF46548">
    <property type="entry name" value="alpha-helical ferredoxin"/>
    <property type="match status" value="1"/>
</dbReference>
<dbReference type="SUPFAM" id="SSF142019">
    <property type="entry name" value="Nqo1 FMN-binding domain-like"/>
    <property type="match status" value="1"/>
</dbReference>
<dbReference type="PROSITE" id="PS00198">
    <property type="entry name" value="4FE4S_FER_1"/>
    <property type="match status" value="2"/>
</dbReference>
<dbReference type="PROSITE" id="PS51379">
    <property type="entry name" value="4FE4S_FER_2"/>
    <property type="match status" value="2"/>
</dbReference>
<comment type="function">
    <text evidence="1">Part of a membrane-bound complex that couples electron transfer with translocation of ions across the membrane. Required to maintain the reduced state of SoxR.</text>
</comment>
<comment type="cofactor">
    <cofactor evidence="1">
        <name>[4Fe-4S] cluster</name>
        <dbReference type="ChEBI" id="CHEBI:49883"/>
    </cofactor>
    <text evidence="1">Binds 2 [4Fe-4S] clusters per subunit.</text>
</comment>
<comment type="subunit">
    <text evidence="1">The complex is composed of six subunits: RsxA, RsxB, RsxC, RsxD, RsxE and RsxG.</text>
</comment>
<comment type="subcellular location">
    <subcellularLocation>
        <location evidence="1">Cell inner membrane</location>
        <topology evidence="1">Peripheral membrane protein</topology>
    </subcellularLocation>
</comment>
<comment type="similarity">
    <text evidence="1">Belongs to the 4Fe4S bacterial-type ferredoxin family. RnfC subfamily.</text>
</comment>
<keyword id="KW-0004">4Fe-4S</keyword>
<keyword id="KW-0997">Cell inner membrane</keyword>
<keyword id="KW-1003">Cell membrane</keyword>
<keyword id="KW-0249">Electron transport</keyword>
<keyword id="KW-0408">Iron</keyword>
<keyword id="KW-0411">Iron-sulfur</keyword>
<keyword id="KW-0472">Membrane</keyword>
<keyword id="KW-0479">Metal-binding</keyword>
<keyword id="KW-0677">Repeat</keyword>
<keyword id="KW-1278">Translocase</keyword>
<keyword id="KW-0813">Transport</keyword>
<accession>Q57PI0</accession>
<organism>
    <name type="scientific">Salmonella choleraesuis (strain SC-B67)</name>
    <dbReference type="NCBI Taxonomy" id="321314"/>
    <lineage>
        <taxon>Bacteria</taxon>
        <taxon>Pseudomonadati</taxon>
        <taxon>Pseudomonadota</taxon>
        <taxon>Gammaproteobacteria</taxon>
        <taxon>Enterobacterales</taxon>
        <taxon>Enterobacteriaceae</taxon>
        <taxon>Salmonella</taxon>
    </lineage>
</organism>
<protein>
    <recommendedName>
        <fullName evidence="1">Ion-translocating oxidoreductase complex subunit C</fullName>
        <ecNumber evidence="1">7.-.-.-</ecNumber>
    </recommendedName>
    <alternativeName>
        <fullName evidence="1">Rsx electron transport complex subunit C</fullName>
    </alternativeName>
</protein>
<gene>
    <name evidence="1" type="primary">rsxC</name>
    <name type="synonym">rnfC</name>
    <name type="ordered locus">SCH_1475</name>
</gene>
<feature type="chain" id="PRO_1000013610" description="Ion-translocating oxidoreductase complex subunit C">
    <location>
        <begin position="1"/>
        <end position="704"/>
    </location>
</feature>
<feature type="domain" description="4Fe-4S ferredoxin-type 1" evidence="1">
    <location>
        <begin position="368"/>
        <end position="397"/>
    </location>
</feature>
<feature type="domain" description="4Fe-4S ferredoxin-type 2" evidence="1">
    <location>
        <begin position="407"/>
        <end position="436"/>
    </location>
</feature>
<feature type="region of interest" description="Disordered" evidence="2">
    <location>
        <begin position="536"/>
        <end position="684"/>
    </location>
</feature>
<feature type="compositionally biased region" description="Low complexity" evidence="2">
    <location>
        <begin position="556"/>
        <end position="565"/>
    </location>
</feature>
<feature type="binding site" evidence="1">
    <location>
        <position position="377"/>
    </location>
    <ligand>
        <name>[4Fe-4S] cluster</name>
        <dbReference type="ChEBI" id="CHEBI:49883"/>
        <label>1</label>
    </ligand>
</feature>
<feature type="binding site" evidence="1">
    <location>
        <position position="380"/>
    </location>
    <ligand>
        <name>[4Fe-4S] cluster</name>
        <dbReference type="ChEBI" id="CHEBI:49883"/>
        <label>1</label>
    </ligand>
</feature>
<feature type="binding site" evidence="1">
    <location>
        <position position="383"/>
    </location>
    <ligand>
        <name>[4Fe-4S] cluster</name>
        <dbReference type="ChEBI" id="CHEBI:49883"/>
        <label>1</label>
    </ligand>
</feature>
<feature type="binding site" evidence="1">
    <location>
        <position position="387"/>
    </location>
    <ligand>
        <name>[4Fe-4S] cluster</name>
        <dbReference type="ChEBI" id="CHEBI:49883"/>
        <label>2</label>
    </ligand>
</feature>
<feature type="binding site" evidence="1">
    <location>
        <position position="416"/>
    </location>
    <ligand>
        <name>[4Fe-4S] cluster</name>
        <dbReference type="ChEBI" id="CHEBI:49883"/>
        <label>2</label>
    </ligand>
</feature>
<feature type="binding site" evidence="1">
    <location>
        <position position="419"/>
    </location>
    <ligand>
        <name>[4Fe-4S] cluster</name>
        <dbReference type="ChEBI" id="CHEBI:49883"/>
        <label>2</label>
    </ligand>
</feature>
<feature type="binding site" evidence="1">
    <location>
        <position position="422"/>
    </location>
    <ligand>
        <name>[4Fe-4S] cluster</name>
        <dbReference type="ChEBI" id="CHEBI:49883"/>
        <label>2</label>
    </ligand>
</feature>
<feature type="binding site" evidence="1">
    <location>
        <position position="426"/>
    </location>
    <ligand>
        <name>[4Fe-4S] cluster</name>
        <dbReference type="ChEBI" id="CHEBI:49883"/>
        <label>1</label>
    </ligand>
</feature>
<proteinExistence type="inferred from homology"/>
<sequence>MLKLFSAFRKDKIWDFDGGIHPPEMKTQSNGTPLRQVPLAPRFVIPLKQHIGAEGELCVSVGDRVLRGQALTRGRGRMLPVHAPTSGTVIAIAPHSTAHPSALAELSVIIDADGEDRWIEREGWSDYRAHSREALIERIHQYGVAGLGGAGFPTGVKLQGGGDKITTLIINAAECEPYITADDRLMQDCAAQIVEGIRILAHILQPREVLIGIEDNKPQAISMLRAVLADAHDISLRVIPTKYPSGGAKQLTQILTEKQVPHGGRSSDIGVLMQNVGTAYAVKRAVVDGEPITERVVTLTGEAVSRPGNVWARLGTPVRHLLNDAGFCPSADQMVIMGGPLMGFTLPWLDVPVVKITNCLLAPSVAEMGAPQEEKSCIRCSACADACPADLLPQQLYWFSKGQQHDKATAHHIADCIECGACAWVCPSNIPLVQYFRQEKAEINAIRLEEKRAAEAKARFEARQARLEREKAARLARHKSAAVQPAAKDQDAIAAALARVKEKQAQATQPVVIQAGSQPDNSAVIAAREARKAQARAKQAAHPMADSAIPGDDPSKAAVEAAIARAKARKQEQQAGSEPAEPVDPRKAAVEAAIARAKARKQEQQAGSEPVEAVDPRKAAVEAAIARAKARKQEQQTGSEPAEPIDPRKAAVEAAIARAKARKQEQQAGSEPAEPADPRKAAVAAAIARVQAKKAAQQQVVNED</sequence>